<sequence length="275" mass="31675">LDMGHMVNAIEQVDEFLDLGANAIEFDVDFDDDGVAKYTHHGIPCDCGRLCTKYAVLTEYLDYVRQVTTPGDPKFRKELVLLALDLKLQRISSEKAYAAGVDVATKLLDHYWMRGWNGGRAYILLNIPLVEDYEFIRAFKDTLRKEGHEQYNAKVGINFTGNEDLDEIREVLEKLGEDEHIWQADGITSCFPRGTERLKKALEKRDTPGYKYISKVYAWTLVRSSIMRRSLRLGVDGVMSNYPDRVVKVLKEKEFSDKFRLATYADNPWEKFTPI</sequence>
<name>B2I3_SICPE</name>
<proteinExistence type="evidence at transcript level"/>
<reference key="1">
    <citation type="journal article" date="2009" name="Mol. Biol. Evol.">
        <title>Molecular evolution, functional variation, and proposed nomenclature of the gene family that includes sphingomyelinase D in sicariid spider venoms.</title>
        <authorList>
            <person name="Binford G.J."/>
            <person name="Bodner M.R."/>
            <person name="Cordes M.H."/>
            <person name="Baldwin K.L."/>
            <person name="Rynerson M.R."/>
            <person name="Burns S.N."/>
            <person name="Zobel-Thropp P.A."/>
        </authorList>
    </citation>
    <scope>NUCLEOTIDE SEQUENCE [MRNA]</scope>
    <scope>NOMENCLATURE</scope>
    <source>
        <tissue>Venom gland</tissue>
    </source>
</reference>
<keyword id="KW-0204">Cytolysis</keyword>
<keyword id="KW-1061">Dermonecrotic toxin</keyword>
<keyword id="KW-1015">Disulfide bond</keyword>
<keyword id="KW-0354">Hemolysis</keyword>
<keyword id="KW-0442">Lipid degradation</keyword>
<keyword id="KW-0443">Lipid metabolism</keyword>
<keyword id="KW-0456">Lyase</keyword>
<keyword id="KW-0460">Magnesium</keyword>
<keyword id="KW-0479">Metal-binding</keyword>
<keyword id="KW-0964">Secreted</keyword>
<keyword id="KW-0800">Toxin</keyword>
<comment type="function">
    <text evidence="1 3">Dermonecrotic toxins cleave the phosphodiester linkage between the phosphate and headgroup of certain phospholipids (sphingolipid and lysolipid substrates), forming an alcohol (often choline) and a cyclic phosphate (By similarity). This toxin acts on sphingomyelin (SM) (By similarity). It may also act on ceramide phosphoethanolamine (CPE), lysophosphatidylcholine (LPC) and lysophosphatidylethanolamine (LPE), but not on lysophosphatidylserine (LPS), and lysophosphatidylglycerol (LPG) (By similarity). It acts by transphosphatidylation, releasing exclusively cyclic phosphate products as second products (By similarity). Induces dermonecrosis, hemolysis, increased vascular permeability, edema, inflammatory response, and platelet aggregation (By similarity).</text>
</comment>
<comment type="catalytic activity">
    <reaction evidence="1">
        <text>an N-(acyl)-sphingosylphosphocholine = an N-(acyl)-sphingosyl-1,3-cyclic phosphate + choline</text>
        <dbReference type="Rhea" id="RHEA:60652"/>
        <dbReference type="ChEBI" id="CHEBI:15354"/>
        <dbReference type="ChEBI" id="CHEBI:64583"/>
        <dbReference type="ChEBI" id="CHEBI:143892"/>
    </reaction>
</comment>
<comment type="catalytic activity">
    <reaction evidence="1">
        <text>an N-(acyl)-sphingosylphosphoethanolamine = an N-(acyl)-sphingosyl-1,3-cyclic phosphate + ethanolamine</text>
        <dbReference type="Rhea" id="RHEA:60648"/>
        <dbReference type="ChEBI" id="CHEBI:57603"/>
        <dbReference type="ChEBI" id="CHEBI:143891"/>
        <dbReference type="ChEBI" id="CHEBI:143892"/>
    </reaction>
</comment>
<comment type="catalytic activity">
    <reaction evidence="1">
        <text>a 1-acyl-sn-glycero-3-phosphocholine = a 1-acyl-sn-glycero-2,3-cyclic phosphate + choline</text>
        <dbReference type="Rhea" id="RHEA:60700"/>
        <dbReference type="ChEBI" id="CHEBI:15354"/>
        <dbReference type="ChEBI" id="CHEBI:58168"/>
        <dbReference type="ChEBI" id="CHEBI:143947"/>
    </reaction>
</comment>
<comment type="catalytic activity">
    <reaction evidence="1">
        <text>a 1-acyl-sn-glycero-3-phosphoethanolamine = a 1-acyl-sn-glycero-2,3-cyclic phosphate + ethanolamine</text>
        <dbReference type="Rhea" id="RHEA:60704"/>
        <dbReference type="ChEBI" id="CHEBI:57603"/>
        <dbReference type="ChEBI" id="CHEBI:64381"/>
        <dbReference type="ChEBI" id="CHEBI:143947"/>
    </reaction>
</comment>
<comment type="cofactor">
    <cofactor evidence="5">
        <name>Mg(2+)</name>
        <dbReference type="ChEBI" id="CHEBI:18420"/>
    </cofactor>
    <text evidence="5">Binds 1 Mg(2+) ion per subunit.</text>
</comment>
<comment type="subcellular location">
    <subcellularLocation>
        <location evidence="8">Secreted</location>
    </subcellularLocation>
</comment>
<comment type="tissue specificity">
    <text evidence="8">Expressed by the venom gland.</text>
</comment>
<comment type="similarity">
    <text evidence="7">Belongs to the arthropod phospholipase D family. Class II subfamily.</text>
</comment>
<comment type="caution">
    <text evidence="1 2 4">The most common activity assay for dermonecrotic toxins detects enzymatic activity by monitoring choline release from substrate. Liberation of choline from sphingomyelin (SM) or lysophosphatidylcholine (LPC) is commonly assumed to result from substrate hydrolysis, giving either ceramide-1-phosphate (C1P) or lysophosphatidic acid (LPA), respectively, as a second product. However, two studies from Lajoie and colleagues (2013 and 2015) report the observation of exclusive formation of cyclic phosphate products as second products, resulting from intramolecular transphosphatidylation. Cyclic phosphates have vastly different biological properties from their monoester counterparts, and they may be relevant to the pathology of brown spider envenomation.</text>
</comment>
<dbReference type="EC" id="4.6.1.-" evidence="4"/>
<dbReference type="EMBL" id="FJ171496">
    <property type="protein sequence ID" value="ACN48992.1"/>
    <property type="molecule type" value="mRNA"/>
</dbReference>
<dbReference type="SMR" id="C0JB61"/>
<dbReference type="GO" id="GO:0005576">
    <property type="term" value="C:extracellular region"/>
    <property type="evidence" value="ECO:0007669"/>
    <property type="project" value="UniProtKB-SubCell"/>
</dbReference>
<dbReference type="GO" id="GO:0016829">
    <property type="term" value="F:lyase activity"/>
    <property type="evidence" value="ECO:0007669"/>
    <property type="project" value="UniProtKB-KW"/>
</dbReference>
<dbReference type="GO" id="GO:0046872">
    <property type="term" value="F:metal ion binding"/>
    <property type="evidence" value="ECO:0007669"/>
    <property type="project" value="UniProtKB-KW"/>
</dbReference>
<dbReference type="GO" id="GO:0008081">
    <property type="term" value="F:phosphoric diester hydrolase activity"/>
    <property type="evidence" value="ECO:0007669"/>
    <property type="project" value="InterPro"/>
</dbReference>
<dbReference type="GO" id="GO:0090729">
    <property type="term" value="F:toxin activity"/>
    <property type="evidence" value="ECO:0007669"/>
    <property type="project" value="UniProtKB-KW"/>
</dbReference>
<dbReference type="GO" id="GO:0031640">
    <property type="term" value="P:killing of cells of another organism"/>
    <property type="evidence" value="ECO:0007669"/>
    <property type="project" value="UniProtKB-KW"/>
</dbReference>
<dbReference type="GO" id="GO:0016042">
    <property type="term" value="P:lipid catabolic process"/>
    <property type="evidence" value="ECO:0007669"/>
    <property type="project" value="UniProtKB-KW"/>
</dbReference>
<dbReference type="CDD" id="cd08576">
    <property type="entry name" value="GDPD_like_SMaseD_PLD"/>
    <property type="match status" value="1"/>
</dbReference>
<dbReference type="Gene3D" id="3.20.20.190">
    <property type="entry name" value="Phosphatidylinositol (PI) phosphodiesterase"/>
    <property type="match status" value="1"/>
</dbReference>
<dbReference type="InterPro" id="IPR017946">
    <property type="entry name" value="PLC-like_Pdiesterase_TIM-brl"/>
</dbReference>
<dbReference type="SUPFAM" id="SSF51695">
    <property type="entry name" value="PLC-like phosphodiesterases"/>
    <property type="match status" value="1"/>
</dbReference>
<organism>
    <name type="scientific">Sicarius peruensis</name>
    <name type="common">Six-eyed sand spider</name>
    <dbReference type="NCBI Taxonomy" id="571541"/>
    <lineage>
        <taxon>Eukaryota</taxon>
        <taxon>Metazoa</taxon>
        <taxon>Ecdysozoa</taxon>
        <taxon>Arthropoda</taxon>
        <taxon>Chelicerata</taxon>
        <taxon>Arachnida</taxon>
        <taxon>Araneae</taxon>
        <taxon>Araneomorphae</taxon>
        <taxon>Haplogynae</taxon>
        <taxon>Scytodoidea</taxon>
        <taxon>Sicariidae</taxon>
        <taxon>Sicarius</taxon>
    </lineage>
</organism>
<protein>
    <recommendedName>
        <fullName evidence="6">Dermonecrotic toxin SpeSicTox-betaIIA2iii</fullName>
        <ecNumber evidence="4">4.6.1.-</ecNumber>
    </recommendedName>
    <alternativeName>
        <fullName>Phospholipase D</fullName>
        <shortName>PLD</shortName>
    </alternativeName>
    <alternativeName>
        <fullName>Sphingomyelin phosphodiesterase D</fullName>
        <shortName>SMD</shortName>
        <shortName>SMase D</shortName>
        <shortName>Sphingomyelinase D</shortName>
    </alternativeName>
</protein>
<evidence type="ECO:0000250" key="1">
    <source>
        <dbReference type="UniProtKB" id="A0A0D4WTV1"/>
    </source>
</evidence>
<evidence type="ECO:0000250" key="2">
    <source>
        <dbReference type="UniProtKB" id="A0A0D4WV12"/>
    </source>
</evidence>
<evidence type="ECO:0000250" key="3">
    <source>
        <dbReference type="UniProtKB" id="P0CE80"/>
    </source>
</evidence>
<evidence type="ECO:0000250" key="4">
    <source>
        <dbReference type="UniProtKB" id="Q4ZFU2"/>
    </source>
</evidence>
<evidence type="ECO:0000250" key="5">
    <source>
        <dbReference type="UniProtKB" id="Q8I914"/>
    </source>
</evidence>
<evidence type="ECO:0000303" key="6">
    <source>
    </source>
</evidence>
<evidence type="ECO:0000305" key="7"/>
<evidence type="ECO:0000305" key="8">
    <source>
    </source>
</evidence>
<accession>C0JB61</accession>
<feature type="chain" id="PRO_0000392875" description="Dermonecrotic toxin SpeSicTox-betaIIA2iii">
    <location>
        <begin position="1" status="less than"/>
        <end position="275"/>
    </location>
</feature>
<feature type="active site" evidence="5">
    <location>
        <position position="5"/>
    </location>
</feature>
<feature type="active site" description="Nucleophile" evidence="5">
    <location>
        <position position="41"/>
    </location>
</feature>
<feature type="binding site" evidence="5">
    <location>
        <position position="25"/>
    </location>
    <ligand>
        <name>Mg(2+)</name>
        <dbReference type="ChEBI" id="CHEBI:18420"/>
    </ligand>
</feature>
<feature type="binding site" evidence="5">
    <location>
        <position position="27"/>
    </location>
    <ligand>
        <name>Mg(2+)</name>
        <dbReference type="ChEBI" id="CHEBI:18420"/>
    </ligand>
</feature>
<feature type="binding site" evidence="5">
    <location>
        <position position="85"/>
    </location>
    <ligand>
        <name>Mg(2+)</name>
        <dbReference type="ChEBI" id="CHEBI:18420"/>
    </ligand>
</feature>
<feature type="disulfide bond" evidence="3">
    <location>
        <begin position="45"/>
        <end position="51"/>
    </location>
</feature>
<feature type="disulfide bond" evidence="3">
    <location>
        <begin position="47"/>
        <end position="190"/>
    </location>
</feature>
<feature type="non-terminal residue">
    <location>
        <position position="1"/>
    </location>
</feature>